<name>ILVD_BUCCC</name>
<keyword id="KW-0001">2Fe-2S</keyword>
<keyword id="KW-0028">Amino-acid biosynthesis</keyword>
<keyword id="KW-0100">Branched-chain amino acid biosynthesis</keyword>
<keyword id="KW-0408">Iron</keyword>
<keyword id="KW-0411">Iron-sulfur</keyword>
<keyword id="KW-0456">Lyase</keyword>
<keyword id="KW-0460">Magnesium</keyword>
<keyword id="KW-0479">Metal-binding</keyword>
<keyword id="KW-1185">Reference proteome</keyword>
<reference key="1">
    <citation type="journal article" date="2006" name="Science">
        <title>A small microbial genome: the end of a long symbiotic relationship?</title>
        <authorList>
            <person name="Perez-Brocal V."/>
            <person name="Gil R."/>
            <person name="Ramos S."/>
            <person name="Lamelas A."/>
            <person name="Postigo M."/>
            <person name="Michelena J.M."/>
            <person name="Silva F.J."/>
            <person name="Moya A."/>
            <person name="Latorre A."/>
        </authorList>
    </citation>
    <scope>NUCLEOTIDE SEQUENCE [LARGE SCALE GENOMIC DNA]</scope>
    <source>
        <strain>Cc</strain>
    </source>
</reference>
<comment type="function">
    <text evidence="1">Functions in the biosynthesis of branched-chain amino acids. Catalyzes the dehydration of (2R,3R)-2,3-dihydroxy-3-methylpentanoate (2,3-dihydroxy-3-methylvalerate) into 2-oxo-3-methylpentanoate (2-oxo-3-methylvalerate) and of (2R)-2,3-dihydroxy-3-methylbutanoate (2,3-dihydroxyisovalerate) into 2-oxo-3-methylbutanoate (2-oxoisovalerate), the penultimate precursor to L-isoleucine and L-valine, respectively.</text>
</comment>
<comment type="catalytic activity">
    <reaction evidence="1">
        <text>(2R)-2,3-dihydroxy-3-methylbutanoate = 3-methyl-2-oxobutanoate + H2O</text>
        <dbReference type="Rhea" id="RHEA:24809"/>
        <dbReference type="ChEBI" id="CHEBI:11851"/>
        <dbReference type="ChEBI" id="CHEBI:15377"/>
        <dbReference type="ChEBI" id="CHEBI:49072"/>
        <dbReference type="EC" id="4.2.1.9"/>
    </reaction>
    <physiologicalReaction direction="left-to-right" evidence="1">
        <dbReference type="Rhea" id="RHEA:24810"/>
    </physiologicalReaction>
</comment>
<comment type="catalytic activity">
    <reaction evidence="1">
        <text>(2R,3R)-2,3-dihydroxy-3-methylpentanoate = (S)-3-methyl-2-oxopentanoate + H2O</text>
        <dbReference type="Rhea" id="RHEA:27694"/>
        <dbReference type="ChEBI" id="CHEBI:15377"/>
        <dbReference type="ChEBI" id="CHEBI:35146"/>
        <dbReference type="ChEBI" id="CHEBI:49258"/>
        <dbReference type="EC" id="4.2.1.9"/>
    </reaction>
    <physiologicalReaction direction="left-to-right" evidence="1">
        <dbReference type="Rhea" id="RHEA:27695"/>
    </physiologicalReaction>
</comment>
<comment type="cofactor">
    <cofactor evidence="1">
        <name>[2Fe-2S] cluster</name>
        <dbReference type="ChEBI" id="CHEBI:190135"/>
    </cofactor>
    <text evidence="1">Binds 1 [2Fe-2S] cluster per subunit. This cluster acts as a Lewis acid cofactor.</text>
</comment>
<comment type="cofactor">
    <cofactor evidence="1">
        <name>Mg(2+)</name>
        <dbReference type="ChEBI" id="CHEBI:18420"/>
    </cofactor>
</comment>
<comment type="pathway">
    <text evidence="1">Amino-acid biosynthesis; L-isoleucine biosynthesis; L-isoleucine from 2-oxobutanoate: step 3/4.</text>
</comment>
<comment type="pathway">
    <text evidence="1">Amino-acid biosynthesis; L-valine biosynthesis; L-valine from pyruvate: step 3/4.</text>
</comment>
<comment type="subunit">
    <text evidence="1">Homodimer.</text>
</comment>
<comment type="similarity">
    <text evidence="1">Belongs to the IlvD/Edd family.</text>
</comment>
<proteinExistence type="inferred from homology"/>
<feature type="chain" id="PRO_1000000960" description="Dihydroxy-acid dehydratase">
    <location>
        <begin position="1"/>
        <end position="617"/>
    </location>
</feature>
<feature type="active site" description="Proton acceptor" evidence="1">
    <location>
        <position position="518"/>
    </location>
</feature>
<feature type="binding site" evidence="1">
    <location>
        <position position="81"/>
    </location>
    <ligand>
        <name>Mg(2+)</name>
        <dbReference type="ChEBI" id="CHEBI:18420"/>
    </ligand>
</feature>
<feature type="binding site" evidence="1">
    <location>
        <position position="122"/>
    </location>
    <ligand>
        <name>[2Fe-2S] cluster</name>
        <dbReference type="ChEBI" id="CHEBI:190135"/>
    </ligand>
</feature>
<feature type="binding site" evidence="1">
    <location>
        <position position="123"/>
    </location>
    <ligand>
        <name>Mg(2+)</name>
        <dbReference type="ChEBI" id="CHEBI:18420"/>
    </ligand>
</feature>
<feature type="binding site" description="via carbamate group" evidence="1">
    <location>
        <position position="124"/>
    </location>
    <ligand>
        <name>Mg(2+)</name>
        <dbReference type="ChEBI" id="CHEBI:18420"/>
    </ligand>
</feature>
<feature type="binding site" evidence="1">
    <location>
        <position position="195"/>
    </location>
    <ligand>
        <name>[2Fe-2S] cluster</name>
        <dbReference type="ChEBI" id="CHEBI:190135"/>
    </ligand>
</feature>
<feature type="binding site" evidence="1">
    <location>
        <position position="492"/>
    </location>
    <ligand>
        <name>Mg(2+)</name>
        <dbReference type="ChEBI" id="CHEBI:18420"/>
    </ligand>
</feature>
<feature type="modified residue" description="N6-carboxylysine" evidence="1">
    <location>
        <position position="124"/>
    </location>
</feature>
<evidence type="ECO:0000255" key="1">
    <source>
        <dbReference type="HAMAP-Rule" id="MF_00012"/>
    </source>
</evidence>
<sequence>MPKYRSFTTINGKNMAGARALWRATGVKDADFGKPIIAVVNSFTEFVPGHIHLRELGQLVSKEIEKSGGIAKEFNTIAIDDGIAMGHSGMLYSLPSRELIADSIEYMIQAHCVDAMVCISNCDKITPGMLLAALRLNIPSVFVSGGPMESGKILVNEKIIKIDLVDAMMHGANKNTSNKKLLNIEKSACPTCGSCSGMFTANSMNCLTEVLGLSFPGNGSLLATHIDRKNLFLKAGKIIVRNTKNYYENNDSSLLPRSIVTKENLKNAIILDISMGGSSNTVLHLLAMAYEANINFKMIDIDLLSRKVPHLCKISPSSSKYYMEDFHRAGGVFGILSELNKINLLNTSILNILRMSLEKTINKFDILKTKDKKIISFYSSGPGNKKTIYPFSQSFRWKKLDKDRISGCIRSKKYAYSKDGGLAVLTGNLAKNGSIIKTAAITNQSSKIFSGPAKVYESQEDAVYAILNNYIKSGDIIVIRYEGPKGGPGMQEMLYPTTYLKSMGLDKKCALITDGRFSGGTSGISIGHISPEAANKGLIALVYDNDIININIIDRSLKLKISSDEIRKRKEKEENRGIFAYTPKKRLRKISDSLKIYSMFATSADKGAVRNIHKINF</sequence>
<gene>
    <name evidence="1" type="primary">ilvD</name>
    <name type="ordered locus">BCc_389</name>
</gene>
<dbReference type="EC" id="4.2.1.9" evidence="1"/>
<dbReference type="EMBL" id="CP000263">
    <property type="protein sequence ID" value="ABJ90836.1"/>
    <property type="molecule type" value="Genomic_DNA"/>
</dbReference>
<dbReference type="RefSeq" id="WP_011672755.1">
    <property type="nucleotide sequence ID" value="NC_008513.1"/>
</dbReference>
<dbReference type="SMR" id="Q056W3"/>
<dbReference type="STRING" id="372461.BCc_389"/>
<dbReference type="KEGG" id="bcc:BCc_389"/>
<dbReference type="eggNOG" id="COG0129">
    <property type="taxonomic scope" value="Bacteria"/>
</dbReference>
<dbReference type="HOGENOM" id="CLU_014271_4_3_6"/>
<dbReference type="OrthoDB" id="9807077at2"/>
<dbReference type="UniPathway" id="UPA00047">
    <property type="reaction ID" value="UER00057"/>
</dbReference>
<dbReference type="UniPathway" id="UPA00049">
    <property type="reaction ID" value="UER00061"/>
</dbReference>
<dbReference type="Proteomes" id="UP000000669">
    <property type="component" value="Chromosome"/>
</dbReference>
<dbReference type="GO" id="GO:0005829">
    <property type="term" value="C:cytosol"/>
    <property type="evidence" value="ECO:0007669"/>
    <property type="project" value="TreeGrafter"/>
</dbReference>
<dbReference type="GO" id="GO:0051537">
    <property type="term" value="F:2 iron, 2 sulfur cluster binding"/>
    <property type="evidence" value="ECO:0007669"/>
    <property type="project" value="UniProtKB-UniRule"/>
</dbReference>
<dbReference type="GO" id="GO:0004160">
    <property type="term" value="F:dihydroxy-acid dehydratase activity"/>
    <property type="evidence" value="ECO:0007669"/>
    <property type="project" value="UniProtKB-UniRule"/>
</dbReference>
<dbReference type="GO" id="GO:0000287">
    <property type="term" value="F:magnesium ion binding"/>
    <property type="evidence" value="ECO:0007669"/>
    <property type="project" value="UniProtKB-UniRule"/>
</dbReference>
<dbReference type="GO" id="GO:0009097">
    <property type="term" value="P:isoleucine biosynthetic process"/>
    <property type="evidence" value="ECO:0007669"/>
    <property type="project" value="UniProtKB-UniRule"/>
</dbReference>
<dbReference type="GO" id="GO:0009099">
    <property type="term" value="P:L-valine biosynthetic process"/>
    <property type="evidence" value="ECO:0007669"/>
    <property type="project" value="UniProtKB-UniRule"/>
</dbReference>
<dbReference type="FunFam" id="3.50.30.80:FF:000001">
    <property type="entry name" value="Dihydroxy-acid dehydratase"/>
    <property type="match status" value="1"/>
</dbReference>
<dbReference type="Gene3D" id="3.50.30.80">
    <property type="entry name" value="IlvD/EDD C-terminal domain-like"/>
    <property type="match status" value="1"/>
</dbReference>
<dbReference type="HAMAP" id="MF_00012">
    <property type="entry name" value="IlvD"/>
    <property type="match status" value="1"/>
</dbReference>
<dbReference type="InterPro" id="IPR042096">
    <property type="entry name" value="Dihydro-acid_dehy_C"/>
</dbReference>
<dbReference type="InterPro" id="IPR004404">
    <property type="entry name" value="DihydroxyA_deHydtase"/>
</dbReference>
<dbReference type="InterPro" id="IPR020558">
    <property type="entry name" value="DiOHA_6PGluconate_deHydtase_CS"/>
</dbReference>
<dbReference type="InterPro" id="IPR056740">
    <property type="entry name" value="ILV_EDD_C"/>
</dbReference>
<dbReference type="InterPro" id="IPR000581">
    <property type="entry name" value="ILV_EDD_N"/>
</dbReference>
<dbReference type="InterPro" id="IPR037237">
    <property type="entry name" value="IlvD/EDD_N"/>
</dbReference>
<dbReference type="NCBIfam" id="TIGR00110">
    <property type="entry name" value="ilvD"/>
    <property type="match status" value="1"/>
</dbReference>
<dbReference type="NCBIfam" id="NF009103">
    <property type="entry name" value="PRK12448.1"/>
    <property type="match status" value="1"/>
</dbReference>
<dbReference type="PANTHER" id="PTHR43661">
    <property type="entry name" value="D-XYLONATE DEHYDRATASE"/>
    <property type="match status" value="1"/>
</dbReference>
<dbReference type="PANTHER" id="PTHR43661:SF3">
    <property type="entry name" value="D-XYLONATE DEHYDRATASE YAGF-RELATED"/>
    <property type="match status" value="1"/>
</dbReference>
<dbReference type="Pfam" id="PF24877">
    <property type="entry name" value="ILV_EDD_C"/>
    <property type="match status" value="1"/>
</dbReference>
<dbReference type="Pfam" id="PF00920">
    <property type="entry name" value="ILVD_EDD_N"/>
    <property type="match status" value="1"/>
</dbReference>
<dbReference type="SUPFAM" id="SSF143975">
    <property type="entry name" value="IlvD/EDD N-terminal domain-like"/>
    <property type="match status" value="1"/>
</dbReference>
<dbReference type="SUPFAM" id="SSF52016">
    <property type="entry name" value="LeuD/IlvD-like"/>
    <property type="match status" value="1"/>
</dbReference>
<dbReference type="PROSITE" id="PS00886">
    <property type="entry name" value="ILVD_EDD_1"/>
    <property type="match status" value="1"/>
</dbReference>
<dbReference type="PROSITE" id="PS00887">
    <property type="entry name" value="ILVD_EDD_2"/>
    <property type="match status" value="1"/>
</dbReference>
<protein>
    <recommendedName>
        <fullName evidence="1">Dihydroxy-acid dehydratase</fullName>
        <shortName evidence="1">DAD</shortName>
        <ecNumber evidence="1">4.2.1.9</ecNumber>
    </recommendedName>
</protein>
<accession>Q056W3</accession>
<organism>
    <name type="scientific">Buchnera aphidicola subsp. Cinara cedri (strain Cc)</name>
    <dbReference type="NCBI Taxonomy" id="372461"/>
    <lineage>
        <taxon>Bacteria</taxon>
        <taxon>Pseudomonadati</taxon>
        <taxon>Pseudomonadota</taxon>
        <taxon>Gammaproteobacteria</taxon>
        <taxon>Enterobacterales</taxon>
        <taxon>Erwiniaceae</taxon>
        <taxon>Buchnera</taxon>
    </lineage>
</organism>